<feature type="chain" id="PRO_0000308174" description="Serine/threonine-protein phosphatase PP-X homolog 2">
    <location>
        <begin position="1"/>
        <end position="303"/>
    </location>
</feature>
<feature type="active site" description="Proton donor" evidence="1">
    <location>
        <position position="112"/>
    </location>
</feature>
<feature type="binding site" evidence="1">
    <location>
        <position position="51"/>
    </location>
    <ligand>
        <name>Mn(2+)</name>
        <dbReference type="ChEBI" id="CHEBI:29035"/>
        <label>1</label>
    </ligand>
</feature>
<feature type="binding site" evidence="1">
    <location>
        <position position="53"/>
    </location>
    <ligand>
        <name>Mn(2+)</name>
        <dbReference type="ChEBI" id="CHEBI:29035"/>
        <label>1</label>
    </ligand>
</feature>
<feature type="binding site" evidence="1">
    <location>
        <position position="79"/>
    </location>
    <ligand>
        <name>Mn(2+)</name>
        <dbReference type="ChEBI" id="CHEBI:29035"/>
        <label>1</label>
    </ligand>
</feature>
<feature type="binding site" evidence="1">
    <location>
        <position position="79"/>
    </location>
    <ligand>
        <name>Mn(2+)</name>
        <dbReference type="ChEBI" id="CHEBI:29035"/>
        <label>2</label>
    </ligand>
</feature>
<feature type="binding site" evidence="1">
    <location>
        <position position="111"/>
    </location>
    <ligand>
        <name>Mn(2+)</name>
        <dbReference type="ChEBI" id="CHEBI:29035"/>
        <label>2</label>
    </ligand>
</feature>
<feature type="binding site" evidence="1">
    <location>
        <position position="161"/>
    </location>
    <ligand>
        <name>Mn(2+)</name>
        <dbReference type="ChEBI" id="CHEBI:29035"/>
        <label>2</label>
    </ligand>
</feature>
<feature type="binding site" evidence="1">
    <location>
        <position position="235"/>
    </location>
    <ligand>
        <name>Mn(2+)</name>
        <dbReference type="ChEBI" id="CHEBI:29035"/>
        <label>2</label>
    </ligand>
</feature>
<keyword id="KW-0378">Hydrolase</keyword>
<keyword id="KW-0464">Manganese</keyword>
<keyword id="KW-0479">Metal-binding</keyword>
<keyword id="KW-0904">Protein phosphatase</keyword>
<keyword id="KW-1185">Reference proteome</keyword>
<evidence type="ECO:0000250" key="1"/>
<evidence type="ECO:0000305" key="2"/>
<name>PPX2_PARTE</name>
<accession>A0DJ90</accession>
<sequence>MSDIDQWIETLKNGENLKETDVKILCNKAKDILNNEDNVIRVEAPVTICGDIHGQFQDLMELFKVGGDVPETNYLFLGDFVDRGYNSVETFLLLLALKVRYPDQITLIRGNHESRQITQVYGFYDECLRKYSTLNVWKYCTEVFDYLALAAVVNDSIFCVHGGLSPYIKTIDEIRIINRKQEVPHEGVMCDLMWSDPDEIEGWSQSARGAGFVFGADVVKEFNRRNGISLICRAHQLAMEGFKLMFDNSLVTVWSAPNYCYRCGNVASILELDENLKKYYKLFEAAPTDRASNSKKTIADYFL</sequence>
<reference key="1">
    <citation type="journal article" date="2006" name="Nature">
        <title>Global trends of whole-genome duplications revealed by the ciliate Paramecium tetraurelia.</title>
        <authorList>
            <person name="Aury J.-M."/>
            <person name="Jaillon O."/>
            <person name="Duret L."/>
            <person name="Noel B."/>
            <person name="Jubin C."/>
            <person name="Porcel B.M."/>
            <person name="Segurens B."/>
            <person name="Daubin V."/>
            <person name="Anthouard V."/>
            <person name="Aiach N."/>
            <person name="Arnaiz O."/>
            <person name="Billaut A."/>
            <person name="Beisson J."/>
            <person name="Blanc I."/>
            <person name="Bouhouche K."/>
            <person name="Camara F."/>
            <person name="Duharcourt S."/>
            <person name="Guigo R."/>
            <person name="Gogendeau D."/>
            <person name="Katinka M."/>
            <person name="Keller A.-M."/>
            <person name="Kissmehl R."/>
            <person name="Klotz C."/>
            <person name="Koll F."/>
            <person name="Le Mouel A."/>
            <person name="Lepere G."/>
            <person name="Malinsky S."/>
            <person name="Nowacki M."/>
            <person name="Nowak J.K."/>
            <person name="Plattner H."/>
            <person name="Poulain J."/>
            <person name="Ruiz F."/>
            <person name="Serrano V."/>
            <person name="Zagulski M."/>
            <person name="Dessen P."/>
            <person name="Betermier M."/>
            <person name="Weissenbach J."/>
            <person name="Scarpelli C."/>
            <person name="Schaechter V."/>
            <person name="Sperling L."/>
            <person name="Meyer E."/>
            <person name="Cohen J."/>
            <person name="Wincker P."/>
        </authorList>
    </citation>
    <scope>NUCLEOTIDE SEQUENCE [LARGE SCALE GENOMIC DNA]</scope>
    <source>
        <strain>Stock d4-2</strain>
    </source>
</reference>
<proteinExistence type="inferred from homology"/>
<dbReference type="EC" id="3.1.3.16"/>
<dbReference type="EMBL" id="CT868452">
    <property type="protein sequence ID" value="CAK83107.1"/>
    <property type="molecule type" value="Genomic_DNA"/>
</dbReference>
<dbReference type="RefSeq" id="XP_001450504.1">
    <property type="nucleotide sequence ID" value="XM_001450467.1"/>
</dbReference>
<dbReference type="SMR" id="A0DJ90"/>
<dbReference type="FunCoup" id="A0DJ90">
    <property type="interactions" value="1048"/>
</dbReference>
<dbReference type="STRING" id="5888.A0DJ90"/>
<dbReference type="EnsemblProtists" id="CAK83107">
    <property type="protein sequence ID" value="CAK83107"/>
    <property type="gene ID" value="GSPATT00017464001"/>
</dbReference>
<dbReference type="GeneID" id="5036289"/>
<dbReference type="KEGG" id="ptm:GSPATT00017464001"/>
<dbReference type="eggNOG" id="KOG0372">
    <property type="taxonomic scope" value="Eukaryota"/>
</dbReference>
<dbReference type="HOGENOM" id="CLU_004962_8_1_1"/>
<dbReference type="InParanoid" id="A0DJ90"/>
<dbReference type="OMA" id="LCEIICD"/>
<dbReference type="OrthoDB" id="1930084at2759"/>
<dbReference type="Proteomes" id="UP000000600">
    <property type="component" value="Partially assembled WGS sequence"/>
</dbReference>
<dbReference type="GO" id="GO:0005737">
    <property type="term" value="C:cytoplasm"/>
    <property type="evidence" value="ECO:0000318"/>
    <property type="project" value="GO_Central"/>
</dbReference>
<dbReference type="GO" id="GO:0005634">
    <property type="term" value="C:nucleus"/>
    <property type="evidence" value="ECO:0000318"/>
    <property type="project" value="GO_Central"/>
</dbReference>
<dbReference type="GO" id="GO:0046872">
    <property type="term" value="F:metal ion binding"/>
    <property type="evidence" value="ECO:0007669"/>
    <property type="project" value="UniProtKB-KW"/>
</dbReference>
<dbReference type="GO" id="GO:0004722">
    <property type="term" value="F:protein serine/threonine phosphatase activity"/>
    <property type="evidence" value="ECO:0000318"/>
    <property type="project" value="GO_Central"/>
</dbReference>
<dbReference type="GO" id="GO:0000724">
    <property type="term" value="P:double-strand break repair via homologous recombination"/>
    <property type="evidence" value="ECO:0000318"/>
    <property type="project" value="GO_Central"/>
</dbReference>
<dbReference type="CDD" id="cd07415">
    <property type="entry name" value="MPP_PP2A_PP4_PP6"/>
    <property type="match status" value="1"/>
</dbReference>
<dbReference type="FunFam" id="3.60.21.10:FF:000005">
    <property type="entry name" value="Serine/threonine-protein phosphatase"/>
    <property type="match status" value="1"/>
</dbReference>
<dbReference type="Gene3D" id="3.60.21.10">
    <property type="match status" value="1"/>
</dbReference>
<dbReference type="InterPro" id="IPR004843">
    <property type="entry name" value="Calcineurin-like_PHP_ApaH"/>
</dbReference>
<dbReference type="InterPro" id="IPR029052">
    <property type="entry name" value="Metallo-depent_PP-like"/>
</dbReference>
<dbReference type="InterPro" id="IPR047129">
    <property type="entry name" value="PPA2-like"/>
</dbReference>
<dbReference type="InterPro" id="IPR006186">
    <property type="entry name" value="Ser/Thr-sp_prot-phosphatase"/>
</dbReference>
<dbReference type="PANTHER" id="PTHR45619">
    <property type="entry name" value="SERINE/THREONINE-PROTEIN PHOSPHATASE PP2A-RELATED"/>
    <property type="match status" value="1"/>
</dbReference>
<dbReference type="Pfam" id="PF00149">
    <property type="entry name" value="Metallophos"/>
    <property type="match status" value="1"/>
</dbReference>
<dbReference type="PRINTS" id="PR00114">
    <property type="entry name" value="STPHPHTASE"/>
</dbReference>
<dbReference type="SMART" id="SM00156">
    <property type="entry name" value="PP2Ac"/>
    <property type="match status" value="1"/>
</dbReference>
<dbReference type="SUPFAM" id="SSF56300">
    <property type="entry name" value="Metallo-dependent phosphatases"/>
    <property type="match status" value="1"/>
</dbReference>
<dbReference type="PROSITE" id="PS00125">
    <property type="entry name" value="SER_THR_PHOSPHATASE"/>
    <property type="match status" value="1"/>
</dbReference>
<organism>
    <name type="scientific">Paramecium tetraurelia</name>
    <dbReference type="NCBI Taxonomy" id="5888"/>
    <lineage>
        <taxon>Eukaryota</taxon>
        <taxon>Sar</taxon>
        <taxon>Alveolata</taxon>
        <taxon>Ciliophora</taxon>
        <taxon>Intramacronucleata</taxon>
        <taxon>Oligohymenophorea</taxon>
        <taxon>Peniculida</taxon>
        <taxon>Parameciidae</taxon>
        <taxon>Paramecium</taxon>
    </lineage>
</organism>
<gene>
    <name type="primary">Ppx2</name>
    <name type="ORF">GSPATT00017464001</name>
</gene>
<comment type="catalytic activity">
    <reaction>
        <text>O-phospho-L-seryl-[protein] + H2O = L-seryl-[protein] + phosphate</text>
        <dbReference type="Rhea" id="RHEA:20629"/>
        <dbReference type="Rhea" id="RHEA-COMP:9863"/>
        <dbReference type="Rhea" id="RHEA-COMP:11604"/>
        <dbReference type="ChEBI" id="CHEBI:15377"/>
        <dbReference type="ChEBI" id="CHEBI:29999"/>
        <dbReference type="ChEBI" id="CHEBI:43474"/>
        <dbReference type="ChEBI" id="CHEBI:83421"/>
        <dbReference type="EC" id="3.1.3.16"/>
    </reaction>
</comment>
<comment type="catalytic activity">
    <reaction>
        <text>O-phospho-L-threonyl-[protein] + H2O = L-threonyl-[protein] + phosphate</text>
        <dbReference type="Rhea" id="RHEA:47004"/>
        <dbReference type="Rhea" id="RHEA-COMP:11060"/>
        <dbReference type="Rhea" id="RHEA-COMP:11605"/>
        <dbReference type="ChEBI" id="CHEBI:15377"/>
        <dbReference type="ChEBI" id="CHEBI:30013"/>
        <dbReference type="ChEBI" id="CHEBI:43474"/>
        <dbReference type="ChEBI" id="CHEBI:61977"/>
        <dbReference type="EC" id="3.1.3.16"/>
    </reaction>
</comment>
<comment type="cofactor">
    <cofactor evidence="1">
        <name>Mn(2+)</name>
        <dbReference type="ChEBI" id="CHEBI:29035"/>
    </cofactor>
    <text evidence="1">Binds 2 manganese ions per subunit.</text>
</comment>
<comment type="similarity">
    <text evidence="2">Belongs to the PPP phosphatase family. PP-4 (PP-X) subfamily.</text>
</comment>
<protein>
    <recommendedName>
        <fullName>Serine/threonine-protein phosphatase PP-X homolog 2</fullName>
        <ecNumber>3.1.3.16</ecNumber>
    </recommendedName>
</protein>